<name>SPC24_CANAL</name>
<sequence length="252" mass="29160">MTTSVDKLNKLIEEVNNQDELQLIEEINLYIKTLYELRQVKIDQLSNIIHQLNQQIITSNKEINQLNKINDYNYELINVNNFNFVSQQSFQFTNFDRSSSSSSESTNNIFQMINKRLNELDNLKVVIVKELTDLETNLNNLKYKQNNLHESMEDINDKLDKLLNDMDKSGIMEQDPSILRINLFRNLGIKLENMPPNANSGGGGDSNSNSSNNNNTEEDCVIITDDNNNVNILNIEPKLSDYFISNYIWDKL</sequence>
<accession>Q5ALU2</accession>
<accession>A0A1D8PGE5</accession>
<feature type="chain" id="PRO_0000246660" description="Probable kinetochore protein SPC24">
    <location>
        <begin position="1"/>
        <end position="252"/>
    </location>
</feature>
<feature type="region of interest" description="Disordered" evidence="3">
    <location>
        <begin position="194"/>
        <end position="217"/>
    </location>
</feature>
<feature type="coiled-coil region" evidence="2">
    <location>
        <begin position="41"/>
        <end position="71"/>
    </location>
</feature>
<feature type="coiled-coil region" evidence="2">
    <location>
        <begin position="115"/>
        <end position="170"/>
    </location>
</feature>
<feature type="compositionally biased region" description="Low complexity" evidence="3">
    <location>
        <begin position="206"/>
        <end position="217"/>
    </location>
</feature>
<evidence type="ECO:0000250" key="1"/>
<evidence type="ECO:0000255" key="2"/>
<evidence type="ECO:0000256" key="3">
    <source>
        <dbReference type="SAM" id="MobiDB-lite"/>
    </source>
</evidence>
<evidence type="ECO:0000305" key="4"/>
<gene>
    <name type="primary">SPC24</name>
    <name type="ordered locus">CAALFM_C201730WA</name>
    <name type="ORF">CaO19.1484</name>
    <name type="ORF">CaO19.9059</name>
</gene>
<dbReference type="EMBL" id="CP017624">
    <property type="protein sequence ID" value="AOW27219.1"/>
    <property type="molecule type" value="Genomic_DNA"/>
</dbReference>
<dbReference type="RefSeq" id="XP_722533.2">
    <property type="nucleotide sequence ID" value="XM_717440.2"/>
</dbReference>
<dbReference type="SMR" id="Q5ALU2"/>
<dbReference type="STRING" id="237561.Q5ALU2"/>
<dbReference type="PeptideAtlas" id="Q5ALU2"/>
<dbReference type="EnsemblFungi" id="C2_01730W_A-T">
    <property type="protein sequence ID" value="C2_01730W_A-T-p1"/>
    <property type="gene ID" value="C2_01730W_A"/>
</dbReference>
<dbReference type="GeneID" id="3635732"/>
<dbReference type="KEGG" id="cal:CAALFM_C201730WA"/>
<dbReference type="CGD" id="CAL0000192334">
    <property type="gene designation" value="orf19.9059"/>
</dbReference>
<dbReference type="VEuPathDB" id="FungiDB:C2_01730W_A"/>
<dbReference type="eggNOG" id="ENOG502S52R">
    <property type="taxonomic scope" value="Eukaryota"/>
</dbReference>
<dbReference type="HOGENOM" id="CLU_091441_0_0_1"/>
<dbReference type="InParanoid" id="Q5ALU2"/>
<dbReference type="OrthoDB" id="3344830at2759"/>
<dbReference type="PRO" id="PR:Q5ALU2"/>
<dbReference type="Proteomes" id="UP000000559">
    <property type="component" value="Chromosome 2"/>
</dbReference>
<dbReference type="GO" id="GO:0031262">
    <property type="term" value="C:Ndc80 complex"/>
    <property type="evidence" value="ECO:0000250"/>
    <property type="project" value="UniProtKB"/>
</dbReference>
<dbReference type="GO" id="GO:0005634">
    <property type="term" value="C:nucleus"/>
    <property type="evidence" value="ECO:0007669"/>
    <property type="project" value="UniProtKB-SubCell"/>
</dbReference>
<dbReference type="GO" id="GO:0051301">
    <property type="term" value="P:cell division"/>
    <property type="evidence" value="ECO:0007669"/>
    <property type="project" value="UniProtKB-KW"/>
</dbReference>
<dbReference type="GO" id="GO:0007059">
    <property type="term" value="P:chromosome segregation"/>
    <property type="evidence" value="ECO:0000318"/>
    <property type="project" value="GO_Central"/>
</dbReference>
<dbReference type="GO" id="GO:0031134">
    <property type="term" value="P:sister chromatid biorientation"/>
    <property type="evidence" value="ECO:0000250"/>
    <property type="project" value="UniProtKB"/>
</dbReference>
<dbReference type="CDD" id="cd11565">
    <property type="entry name" value="RWD_Spc24"/>
    <property type="match status" value="1"/>
</dbReference>
<dbReference type="Gene3D" id="3.30.160.430">
    <property type="match status" value="1"/>
</dbReference>
<dbReference type="InterPro" id="IPR013252">
    <property type="entry name" value="Ndc80_Spc24"/>
</dbReference>
<dbReference type="InterPro" id="IPR038066">
    <property type="entry name" value="Spc24_Fungi_globular_sf"/>
</dbReference>
<dbReference type="PANTHER" id="PTHR22142">
    <property type="match status" value="1"/>
</dbReference>
<dbReference type="PANTHER" id="PTHR22142:SF2">
    <property type="entry name" value="KINETOCHORE PROTEIN SPC24"/>
    <property type="match status" value="1"/>
</dbReference>
<dbReference type="Pfam" id="PF08286">
    <property type="entry name" value="Spc24"/>
    <property type="match status" value="1"/>
</dbReference>
<dbReference type="SUPFAM" id="SSF143026">
    <property type="entry name" value="Kinetochore globular domain"/>
    <property type="match status" value="1"/>
</dbReference>
<proteinExistence type="inferred from homology"/>
<reference key="1">
    <citation type="journal article" date="2004" name="Proc. Natl. Acad. Sci. U.S.A.">
        <title>The diploid genome sequence of Candida albicans.</title>
        <authorList>
            <person name="Jones T."/>
            <person name="Federspiel N.A."/>
            <person name="Chibana H."/>
            <person name="Dungan J."/>
            <person name="Kalman S."/>
            <person name="Magee B.B."/>
            <person name="Newport G."/>
            <person name="Thorstenson Y.R."/>
            <person name="Agabian N."/>
            <person name="Magee P.T."/>
            <person name="Davis R.W."/>
            <person name="Scherer S."/>
        </authorList>
    </citation>
    <scope>NUCLEOTIDE SEQUENCE [LARGE SCALE GENOMIC DNA]</scope>
    <source>
        <strain>SC5314 / ATCC MYA-2876</strain>
    </source>
</reference>
<reference key="2">
    <citation type="journal article" date="2007" name="Genome Biol.">
        <title>Assembly of the Candida albicans genome into sixteen supercontigs aligned on the eight chromosomes.</title>
        <authorList>
            <person name="van het Hoog M."/>
            <person name="Rast T.J."/>
            <person name="Martchenko M."/>
            <person name="Grindle S."/>
            <person name="Dignard D."/>
            <person name="Hogues H."/>
            <person name="Cuomo C."/>
            <person name="Berriman M."/>
            <person name="Scherer S."/>
            <person name="Magee B.B."/>
            <person name="Whiteway M."/>
            <person name="Chibana H."/>
            <person name="Nantel A."/>
            <person name="Magee P.T."/>
        </authorList>
    </citation>
    <scope>GENOME REANNOTATION</scope>
    <source>
        <strain>SC5314 / ATCC MYA-2876</strain>
    </source>
</reference>
<reference key="3">
    <citation type="journal article" date="2013" name="Genome Biol.">
        <title>Assembly of a phased diploid Candida albicans genome facilitates allele-specific measurements and provides a simple model for repeat and indel structure.</title>
        <authorList>
            <person name="Muzzey D."/>
            <person name="Schwartz K."/>
            <person name="Weissman J.S."/>
            <person name="Sherlock G."/>
        </authorList>
    </citation>
    <scope>NUCLEOTIDE SEQUENCE [LARGE SCALE GENOMIC DNA]</scope>
    <scope>GENOME REANNOTATION</scope>
    <source>
        <strain>SC5314 / ATCC MYA-2876</strain>
    </source>
</reference>
<organism>
    <name type="scientific">Candida albicans (strain SC5314 / ATCC MYA-2876)</name>
    <name type="common">Yeast</name>
    <dbReference type="NCBI Taxonomy" id="237561"/>
    <lineage>
        <taxon>Eukaryota</taxon>
        <taxon>Fungi</taxon>
        <taxon>Dikarya</taxon>
        <taxon>Ascomycota</taxon>
        <taxon>Saccharomycotina</taxon>
        <taxon>Pichiomycetes</taxon>
        <taxon>Debaryomycetaceae</taxon>
        <taxon>Candida/Lodderomyces clade</taxon>
        <taxon>Candida</taxon>
    </lineage>
</organism>
<comment type="function">
    <text evidence="1">Acts as a component of the essential kinetochore-associated NDC80 complex, which is required for chromosome segregation and spindle checkpoint activity.</text>
</comment>
<comment type="subunit">
    <text evidence="1">Component of the NDC80 complex, which consists of NDC80, NUF2, SPC24 and SPC25.</text>
</comment>
<comment type="subcellular location">
    <subcellularLocation>
        <location evidence="1">Nucleus</location>
    </subcellularLocation>
    <subcellularLocation>
        <location evidence="1">Chromosome</location>
        <location evidence="1">Centromere</location>
        <location evidence="1">Kinetochore</location>
    </subcellularLocation>
    <text evidence="1">Associated with kinetochores.</text>
</comment>
<comment type="similarity">
    <text evidence="4">Belongs to the SPC24 family.</text>
</comment>
<protein>
    <recommendedName>
        <fullName>Probable kinetochore protein SPC24</fullName>
    </recommendedName>
</protein>
<keyword id="KW-0131">Cell cycle</keyword>
<keyword id="KW-0132">Cell division</keyword>
<keyword id="KW-0137">Centromere</keyword>
<keyword id="KW-0158">Chromosome</keyword>
<keyword id="KW-0175">Coiled coil</keyword>
<keyword id="KW-0995">Kinetochore</keyword>
<keyword id="KW-0498">Mitosis</keyword>
<keyword id="KW-0539">Nucleus</keyword>
<keyword id="KW-1185">Reference proteome</keyword>